<gene>
    <name evidence="1" type="primary">luxS</name>
    <name type="ordered locus">SPN23F03130</name>
</gene>
<organism>
    <name type="scientific">Streptococcus pneumoniae (strain ATCC 700669 / Spain 23F-1)</name>
    <dbReference type="NCBI Taxonomy" id="561276"/>
    <lineage>
        <taxon>Bacteria</taxon>
        <taxon>Bacillati</taxon>
        <taxon>Bacillota</taxon>
        <taxon>Bacilli</taxon>
        <taxon>Lactobacillales</taxon>
        <taxon>Streptococcaceae</taxon>
        <taxon>Streptococcus</taxon>
    </lineage>
</organism>
<evidence type="ECO:0000255" key="1">
    <source>
        <dbReference type="HAMAP-Rule" id="MF_00091"/>
    </source>
</evidence>
<proteinExistence type="inferred from homology"/>
<comment type="function">
    <text evidence="1">Involved in the synthesis of autoinducer 2 (AI-2) which is secreted by bacteria and is used to communicate both the cell density and the metabolic potential of the environment. The regulation of gene expression in response to changes in cell density is called quorum sensing. Catalyzes the transformation of S-ribosylhomocysteine (RHC) to homocysteine (HC) and 4,5-dihydroxy-2,3-pentadione (DPD).</text>
</comment>
<comment type="catalytic activity">
    <reaction evidence="1">
        <text>S-(5-deoxy-D-ribos-5-yl)-L-homocysteine = (S)-4,5-dihydroxypentane-2,3-dione + L-homocysteine</text>
        <dbReference type="Rhea" id="RHEA:17753"/>
        <dbReference type="ChEBI" id="CHEBI:29484"/>
        <dbReference type="ChEBI" id="CHEBI:58195"/>
        <dbReference type="ChEBI" id="CHEBI:58199"/>
        <dbReference type="EC" id="4.4.1.21"/>
    </reaction>
</comment>
<comment type="cofactor">
    <cofactor evidence="1">
        <name>Fe cation</name>
        <dbReference type="ChEBI" id="CHEBI:24875"/>
    </cofactor>
    <text evidence="1">Binds 1 Fe cation per subunit.</text>
</comment>
<comment type="subunit">
    <text evidence="1">Homodimer.</text>
</comment>
<comment type="similarity">
    <text evidence="1">Belongs to the LuxS family.</text>
</comment>
<protein>
    <recommendedName>
        <fullName evidence="1">S-ribosylhomocysteine lyase</fullName>
        <ecNumber evidence="1">4.4.1.21</ecNumber>
    </recommendedName>
    <alternativeName>
        <fullName evidence="1">AI-2 synthesis protein</fullName>
    </alternativeName>
    <alternativeName>
        <fullName evidence="1">Autoinducer-2 production protein LuxS</fullName>
    </alternativeName>
</protein>
<name>LUXS_STRPJ</name>
<dbReference type="EC" id="4.4.1.21" evidence="1"/>
<dbReference type="EMBL" id="FM211187">
    <property type="protein sequence ID" value="CAR68170.1"/>
    <property type="molecule type" value="Genomic_DNA"/>
</dbReference>
<dbReference type="RefSeq" id="WP_000032551.1">
    <property type="nucleotide sequence ID" value="NC_011900.1"/>
</dbReference>
<dbReference type="SMR" id="B8ZL57"/>
<dbReference type="KEGG" id="sne:SPN23F03130"/>
<dbReference type="HOGENOM" id="CLU_107531_2_1_9"/>
<dbReference type="GO" id="GO:0005506">
    <property type="term" value="F:iron ion binding"/>
    <property type="evidence" value="ECO:0007669"/>
    <property type="project" value="InterPro"/>
</dbReference>
<dbReference type="GO" id="GO:0043768">
    <property type="term" value="F:S-ribosylhomocysteine lyase activity"/>
    <property type="evidence" value="ECO:0007669"/>
    <property type="project" value="UniProtKB-UniRule"/>
</dbReference>
<dbReference type="GO" id="GO:0009372">
    <property type="term" value="P:quorum sensing"/>
    <property type="evidence" value="ECO:0007669"/>
    <property type="project" value="UniProtKB-UniRule"/>
</dbReference>
<dbReference type="Gene3D" id="3.30.1360.80">
    <property type="entry name" value="S-ribosylhomocysteinase (LuxS)"/>
    <property type="match status" value="1"/>
</dbReference>
<dbReference type="HAMAP" id="MF_00091">
    <property type="entry name" value="LuxS"/>
    <property type="match status" value="1"/>
</dbReference>
<dbReference type="InterPro" id="IPR037005">
    <property type="entry name" value="LuxS_sf"/>
</dbReference>
<dbReference type="InterPro" id="IPR011249">
    <property type="entry name" value="Metalloenz_LuxS/M16"/>
</dbReference>
<dbReference type="InterPro" id="IPR003815">
    <property type="entry name" value="S-ribosylhomocysteinase"/>
</dbReference>
<dbReference type="NCBIfam" id="NF002607">
    <property type="entry name" value="PRK02260.2-5"/>
    <property type="match status" value="1"/>
</dbReference>
<dbReference type="NCBIfam" id="NF002608">
    <property type="entry name" value="PRK02260.3-1"/>
    <property type="match status" value="1"/>
</dbReference>
<dbReference type="PANTHER" id="PTHR35799">
    <property type="entry name" value="S-RIBOSYLHOMOCYSTEINE LYASE"/>
    <property type="match status" value="1"/>
</dbReference>
<dbReference type="PANTHER" id="PTHR35799:SF1">
    <property type="entry name" value="S-RIBOSYLHOMOCYSTEINE LYASE"/>
    <property type="match status" value="1"/>
</dbReference>
<dbReference type="Pfam" id="PF02664">
    <property type="entry name" value="LuxS"/>
    <property type="match status" value="1"/>
</dbReference>
<dbReference type="PIRSF" id="PIRSF006160">
    <property type="entry name" value="AI2"/>
    <property type="match status" value="1"/>
</dbReference>
<dbReference type="PRINTS" id="PR01487">
    <property type="entry name" value="LUXSPROTEIN"/>
</dbReference>
<dbReference type="SUPFAM" id="SSF63411">
    <property type="entry name" value="LuxS/MPP-like metallohydrolase"/>
    <property type="match status" value="1"/>
</dbReference>
<accession>B8ZL57</accession>
<sequence length="160" mass="17951">MSKEVIVESFELDHTIVKAPYVRLIGEETGPKGDIISNYDIRLVQPNEDSIPTAGLHTIEHLLAKLIRTRIDGMIDCSPFGCRTGFHMIMWGRHTSAKIAAVIKDSLKEIAETTTWEDVPGTTIESCGNYKDHSLFSAKEWARLILEQGISDDAFERHVI</sequence>
<feature type="chain" id="PRO_1000191041" description="S-ribosylhomocysteine lyase">
    <location>
        <begin position="1"/>
        <end position="160"/>
    </location>
</feature>
<feature type="binding site" evidence="1">
    <location>
        <position position="57"/>
    </location>
    <ligand>
        <name>Fe cation</name>
        <dbReference type="ChEBI" id="CHEBI:24875"/>
    </ligand>
</feature>
<feature type="binding site" evidence="1">
    <location>
        <position position="61"/>
    </location>
    <ligand>
        <name>Fe cation</name>
        <dbReference type="ChEBI" id="CHEBI:24875"/>
    </ligand>
</feature>
<feature type="binding site" evidence="1">
    <location>
        <position position="127"/>
    </location>
    <ligand>
        <name>Fe cation</name>
        <dbReference type="ChEBI" id="CHEBI:24875"/>
    </ligand>
</feature>
<reference key="1">
    <citation type="journal article" date="2009" name="J. Bacteriol.">
        <title>Role of conjugative elements in the evolution of the multidrug-resistant pandemic clone Streptococcus pneumoniae Spain23F ST81.</title>
        <authorList>
            <person name="Croucher N.J."/>
            <person name="Walker D."/>
            <person name="Romero P."/>
            <person name="Lennard N."/>
            <person name="Paterson G.K."/>
            <person name="Bason N.C."/>
            <person name="Mitchell A.M."/>
            <person name="Quail M.A."/>
            <person name="Andrew P.W."/>
            <person name="Parkhill J."/>
            <person name="Bentley S.D."/>
            <person name="Mitchell T.J."/>
        </authorList>
    </citation>
    <scope>NUCLEOTIDE SEQUENCE [LARGE SCALE GENOMIC DNA]</scope>
    <source>
        <strain>ATCC 700669 / Spain 23F-1</strain>
    </source>
</reference>
<keyword id="KW-0071">Autoinducer synthesis</keyword>
<keyword id="KW-0408">Iron</keyword>
<keyword id="KW-0456">Lyase</keyword>
<keyword id="KW-0479">Metal-binding</keyword>
<keyword id="KW-0673">Quorum sensing</keyword>